<evidence type="ECO:0000250" key="1"/>
<evidence type="ECO:0000255" key="2"/>
<evidence type="ECO:0000255" key="3">
    <source>
        <dbReference type="PROSITE-ProRule" id="PRU00121"/>
    </source>
</evidence>
<evidence type="ECO:0000255" key="4">
    <source>
        <dbReference type="PROSITE-ProRule" id="PRU00196"/>
    </source>
</evidence>
<evidence type="ECO:0000255" key="5">
    <source>
        <dbReference type="PROSITE-ProRule" id="PRU00274"/>
    </source>
</evidence>
<evidence type="ECO:0000256" key="6">
    <source>
        <dbReference type="SAM" id="MobiDB-lite"/>
    </source>
</evidence>
<reference key="1">
    <citation type="journal article" date="2005" name="Cytogenet. Genome Res.">
        <title>Genetic evidence of a strong functional constraint of neurotrypsin during primate evolution.</title>
        <authorList>
            <person name="Xu H.L."/>
            <person name="Su B."/>
        </authorList>
    </citation>
    <scope>NUCLEOTIDE SEQUENCE [GENOMIC DNA]</scope>
</reference>
<protein>
    <recommendedName>
        <fullName>Neurotrypsin</fullName>
        <ecNumber>3.4.21.-</ecNumber>
    </recommendedName>
    <alternativeName>
        <fullName>Serine protease 12</fullName>
    </alternativeName>
</protein>
<dbReference type="EC" id="3.4.21.-"/>
<dbReference type="EMBL" id="AY862978">
    <property type="protein sequence ID" value="AAW57540.1"/>
    <property type="molecule type" value="Genomic_DNA"/>
</dbReference>
<dbReference type="EMBL" id="AY862894">
    <property type="protein sequence ID" value="AAW57540.1"/>
    <property type="status" value="JOINED"/>
    <property type="molecule type" value="Genomic_DNA"/>
</dbReference>
<dbReference type="EMBL" id="AY862901">
    <property type="protein sequence ID" value="AAW57540.1"/>
    <property type="status" value="JOINED"/>
    <property type="molecule type" value="Genomic_DNA"/>
</dbReference>
<dbReference type="EMBL" id="AY862908">
    <property type="protein sequence ID" value="AAW57540.1"/>
    <property type="status" value="JOINED"/>
    <property type="molecule type" value="Genomic_DNA"/>
</dbReference>
<dbReference type="EMBL" id="AY862915">
    <property type="protein sequence ID" value="AAW57540.1"/>
    <property type="status" value="JOINED"/>
    <property type="molecule type" value="Genomic_DNA"/>
</dbReference>
<dbReference type="EMBL" id="AY862922">
    <property type="protein sequence ID" value="AAW57540.1"/>
    <property type="status" value="JOINED"/>
    <property type="molecule type" value="Genomic_DNA"/>
</dbReference>
<dbReference type="EMBL" id="AY862929">
    <property type="protein sequence ID" value="AAW57540.1"/>
    <property type="status" value="JOINED"/>
    <property type="molecule type" value="Genomic_DNA"/>
</dbReference>
<dbReference type="EMBL" id="AY862936">
    <property type="protein sequence ID" value="AAW57540.1"/>
    <property type="status" value="JOINED"/>
    <property type="molecule type" value="Genomic_DNA"/>
</dbReference>
<dbReference type="EMBL" id="AY862943">
    <property type="protein sequence ID" value="AAW57540.1"/>
    <property type="status" value="JOINED"/>
    <property type="molecule type" value="Genomic_DNA"/>
</dbReference>
<dbReference type="EMBL" id="AY862950">
    <property type="protein sequence ID" value="AAW57540.1"/>
    <property type="status" value="JOINED"/>
    <property type="molecule type" value="Genomic_DNA"/>
</dbReference>
<dbReference type="EMBL" id="AY862957">
    <property type="protein sequence ID" value="AAW57540.1"/>
    <property type="status" value="JOINED"/>
    <property type="molecule type" value="Genomic_DNA"/>
</dbReference>
<dbReference type="EMBL" id="AY862964">
    <property type="protein sequence ID" value="AAW57540.1"/>
    <property type="status" value="JOINED"/>
    <property type="molecule type" value="Genomic_DNA"/>
</dbReference>
<dbReference type="EMBL" id="AY862971">
    <property type="protein sequence ID" value="AAW57540.1"/>
    <property type="status" value="JOINED"/>
    <property type="molecule type" value="Genomic_DNA"/>
</dbReference>
<dbReference type="MEROPS" id="S01.237"/>
<dbReference type="GlyCosmos" id="Q5G269">
    <property type="glycosylation" value="2 sites, No reported glycans"/>
</dbReference>
<dbReference type="GO" id="GO:0030424">
    <property type="term" value="C:axon"/>
    <property type="evidence" value="ECO:0000250"/>
    <property type="project" value="UniProtKB"/>
</dbReference>
<dbReference type="GO" id="GO:0005576">
    <property type="term" value="C:extracellular region"/>
    <property type="evidence" value="ECO:0007669"/>
    <property type="project" value="UniProtKB-SubCell"/>
</dbReference>
<dbReference type="GO" id="GO:0005886">
    <property type="term" value="C:plasma membrane"/>
    <property type="evidence" value="ECO:0000250"/>
    <property type="project" value="UniProtKB"/>
</dbReference>
<dbReference type="GO" id="GO:0004252">
    <property type="term" value="F:serine-type endopeptidase activity"/>
    <property type="evidence" value="ECO:0007669"/>
    <property type="project" value="InterPro"/>
</dbReference>
<dbReference type="GO" id="GO:0006887">
    <property type="term" value="P:exocytosis"/>
    <property type="evidence" value="ECO:0000250"/>
    <property type="project" value="UniProtKB"/>
</dbReference>
<dbReference type="GO" id="GO:0006508">
    <property type="term" value="P:proteolysis"/>
    <property type="evidence" value="ECO:0007669"/>
    <property type="project" value="UniProtKB-KW"/>
</dbReference>
<dbReference type="CDD" id="cd00190">
    <property type="entry name" value="Tryp_SPc"/>
    <property type="match status" value="1"/>
</dbReference>
<dbReference type="FunFam" id="2.40.10.10:FF:000053">
    <property type="entry name" value="Neurotrypsin"/>
    <property type="match status" value="1"/>
</dbReference>
<dbReference type="FunFam" id="2.40.20.10:FF:000010">
    <property type="entry name" value="Neurotrypsin"/>
    <property type="match status" value="1"/>
</dbReference>
<dbReference type="FunFam" id="3.10.250.10:FF:000019">
    <property type="entry name" value="Neurotrypsin"/>
    <property type="match status" value="1"/>
</dbReference>
<dbReference type="FunFam" id="3.10.250.10:FF:000005">
    <property type="entry name" value="Neurotrypsin isoform A"/>
    <property type="match status" value="2"/>
</dbReference>
<dbReference type="FunFam" id="3.10.250.10:FF:000006">
    <property type="entry name" value="neurotrypsin isoform X2"/>
    <property type="match status" value="1"/>
</dbReference>
<dbReference type="Gene3D" id="2.40.20.10">
    <property type="entry name" value="Plasminogen Kringle 4"/>
    <property type="match status" value="1"/>
</dbReference>
<dbReference type="Gene3D" id="3.10.250.10">
    <property type="entry name" value="SRCR-like domain"/>
    <property type="match status" value="4"/>
</dbReference>
<dbReference type="Gene3D" id="2.40.10.10">
    <property type="entry name" value="Trypsin-like serine proteases"/>
    <property type="match status" value="1"/>
</dbReference>
<dbReference type="InterPro" id="IPR000001">
    <property type="entry name" value="Kringle"/>
</dbReference>
<dbReference type="InterPro" id="IPR013806">
    <property type="entry name" value="Kringle-like"/>
</dbReference>
<dbReference type="InterPro" id="IPR018056">
    <property type="entry name" value="Kringle_CS"/>
</dbReference>
<dbReference type="InterPro" id="IPR038178">
    <property type="entry name" value="Kringle_sf"/>
</dbReference>
<dbReference type="InterPro" id="IPR009003">
    <property type="entry name" value="Peptidase_S1_PA"/>
</dbReference>
<dbReference type="InterPro" id="IPR043504">
    <property type="entry name" value="Peptidase_S1_PA_chymotrypsin"/>
</dbReference>
<dbReference type="InterPro" id="IPR001314">
    <property type="entry name" value="Peptidase_S1A"/>
</dbReference>
<dbReference type="InterPro" id="IPR001190">
    <property type="entry name" value="SRCR"/>
</dbReference>
<dbReference type="InterPro" id="IPR036772">
    <property type="entry name" value="SRCR-like_dom_sf"/>
</dbReference>
<dbReference type="InterPro" id="IPR001254">
    <property type="entry name" value="Trypsin_dom"/>
</dbReference>
<dbReference type="InterPro" id="IPR018114">
    <property type="entry name" value="TRYPSIN_HIS"/>
</dbReference>
<dbReference type="InterPro" id="IPR033116">
    <property type="entry name" value="TRYPSIN_SER"/>
</dbReference>
<dbReference type="PANTHER" id="PTHR19331:SF465">
    <property type="entry name" value="EGG PEPTIDE SPERACT RECEPTOR"/>
    <property type="match status" value="1"/>
</dbReference>
<dbReference type="PANTHER" id="PTHR19331">
    <property type="entry name" value="SCAVENGER RECEPTOR DOMAIN-CONTAINING"/>
    <property type="match status" value="1"/>
</dbReference>
<dbReference type="Pfam" id="PF00051">
    <property type="entry name" value="Kringle"/>
    <property type="match status" value="1"/>
</dbReference>
<dbReference type="Pfam" id="PF00530">
    <property type="entry name" value="SRCR"/>
    <property type="match status" value="4"/>
</dbReference>
<dbReference type="Pfam" id="PF00089">
    <property type="entry name" value="Trypsin"/>
    <property type="match status" value="1"/>
</dbReference>
<dbReference type="PRINTS" id="PR00722">
    <property type="entry name" value="CHYMOTRYPSIN"/>
</dbReference>
<dbReference type="PRINTS" id="PR00258">
    <property type="entry name" value="SPERACTRCPTR"/>
</dbReference>
<dbReference type="SMART" id="SM00130">
    <property type="entry name" value="KR"/>
    <property type="match status" value="1"/>
</dbReference>
<dbReference type="SMART" id="SM00202">
    <property type="entry name" value="SR"/>
    <property type="match status" value="4"/>
</dbReference>
<dbReference type="SMART" id="SM00020">
    <property type="entry name" value="Tryp_SPc"/>
    <property type="match status" value="1"/>
</dbReference>
<dbReference type="SUPFAM" id="SSF57440">
    <property type="entry name" value="Kringle-like"/>
    <property type="match status" value="1"/>
</dbReference>
<dbReference type="SUPFAM" id="SSF56487">
    <property type="entry name" value="SRCR-like"/>
    <property type="match status" value="4"/>
</dbReference>
<dbReference type="SUPFAM" id="SSF50494">
    <property type="entry name" value="Trypsin-like serine proteases"/>
    <property type="match status" value="1"/>
</dbReference>
<dbReference type="PROSITE" id="PS00021">
    <property type="entry name" value="KRINGLE_1"/>
    <property type="match status" value="1"/>
</dbReference>
<dbReference type="PROSITE" id="PS50070">
    <property type="entry name" value="KRINGLE_2"/>
    <property type="match status" value="1"/>
</dbReference>
<dbReference type="PROSITE" id="PS00420">
    <property type="entry name" value="SRCR_1"/>
    <property type="match status" value="2"/>
</dbReference>
<dbReference type="PROSITE" id="PS50287">
    <property type="entry name" value="SRCR_2"/>
    <property type="match status" value="4"/>
</dbReference>
<dbReference type="PROSITE" id="PS50240">
    <property type="entry name" value="TRYPSIN_DOM"/>
    <property type="match status" value="1"/>
</dbReference>
<dbReference type="PROSITE" id="PS00134">
    <property type="entry name" value="TRYPSIN_HIS"/>
    <property type="match status" value="1"/>
</dbReference>
<dbReference type="PROSITE" id="PS00135">
    <property type="entry name" value="TRYPSIN_SER"/>
    <property type="match status" value="1"/>
</dbReference>
<sequence length="877" mass="97373">MTLARFVLALVLGALPEVVSFDSVLNDSLHHRHRHRHSPPPGLQYPYYLPTQQRPPRTRPPPPLPRFPRPPRALPAQRPHALQAGHTPRPHPWGCPAGEPWVSVTDFGAPCLQWAEVPPFLERSPPASWAQLRGQRHNFCRSPDGAGRPWCFYGDARGKVDWGYCDCRHGSVRLRGGKNEFEGTVEVYASGVWGTVCSSHWDDSDASVICHQLQLGGKGIAKQTPFSGLGLIPIYWSNVRCQGDEENILLCEKDIWQGGVCPQKMAAAVTCSFSHGPTFPIIRLVGGSSVHEGRVELYHAGQWGTVCDDQWDDADAEVICRQLSLSGIAKAWHQAYFGEGSGPVMLDEVRCTGNELSIEQCPKSSWGEHNCGHKEDAGVSCTPLTDGVIRLAGGKGSHEGRLEVYYRGQWGTVCDDGWTELNTYVVCRQLGFKFGKQASANHFEESTGPIWLDDVSCSGKETRFLQCSRRQWGRHDCSHREDVSIACYPGGEGHRLSLGFPVRLMDGENKKEGRVEVFINGQWGTICDDGWTDKDAAVICRQLGYKGPARARTMAYFGEGKGPIHVDNVRCTGNERSLADCIKQDIGRHNCRHSEDAGVICDYFGKKASGNSNKESLSSVCGLRLLHRRQKRIIGGKNSLRGGWPWQVSLRLKSSHGDGRLLCGATLLSSCWVLTAAHCFKRYGNSTRNYAVRVGDYHTLVPEEFEEEVGVQQIVIHREYRPDSSDYDIALVRLQGPEEQCARFSSHVLPACLPLWRERPQKTASNCYITGWGDTGRAYSRTLQQAAIPLLPKRFCEERYKGXFTGRMLCAGNLHEHKRVDSCQGDSGGPLMCERPGESWVVYGVTSWGYGCGVKDSPGVYTKVSAFVPWIKSVTKL</sequence>
<organism>
    <name type="scientific">Pongo pygmaeus</name>
    <name type="common">Bornean orangutan</name>
    <dbReference type="NCBI Taxonomy" id="9600"/>
    <lineage>
        <taxon>Eukaryota</taxon>
        <taxon>Metazoa</taxon>
        <taxon>Chordata</taxon>
        <taxon>Craniata</taxon>
        <taxon>Vertebrata</taxon>
        <taxon>Euteleostomi</taxon>
        <taxon>Mammalia</taxon>
        <taxon>Eutheria</taxon>
        <taxon>Euarchontoglires</taxon>
        <taxon>Primates</taxon>
        <taxon>Haplorrhini</taxon>
        <taxon>Catarrhini</taxon>
        <taxon>Hominidae</taxon>
        <taxon>Pongo</taxon>
    </lineage>
</organism>
<feature type="signal peptide" evidence="2">
    <location>
        <begin position="1"/>
        <end position="20"/>
    </location>
</feature>
<feature type="chain" id="PRO_0000027667" description="Neurotrypsin">
    <location>
        <begin position="21"/>
        <end position="877"/>
    </location>
</feature>
<feature type="domain" description="Kringle" evidence="3">
    <location>
        <begin position="95"/>
        <end position="167"/>
    </location>
</feature>
<feature type="domain" description="SRCR 1" evidence="4">
    <location>
        <begin position="172"/>
        <end position="273"/>
    </location>
</feature>
<feature type="domain" description="SRCR 2" evidence="4">
    <location>
        <begin position="282"/>
        <end position="383"/>
    </location>
</feature>
<feature type="domain" description="SRCR 3" evidence="4">
    <location>
        <begin position="389"/>
        <end position="489"/>
    </location>
</feature>
<feature type="domain" description="SRCR 4" evidence="4">
    <location>
        <begin position="502"/>
        <end position="603"/>
    </location>
</feature>
<feature type="domain" description="Peptidase S1" evidence="5">
    <location>
        <begin position="633"/>
        <end position="876"/>
    </location>
</feature>
<feature type="region of interest" description="Disordered" evidence="6">
    <location>
        <begin position="31"/>
        <end position="90"/>
    </location>
</feature>
<feature type="region of interest" description="Zymogen activation region">
    <location>
        <begin position="621"/>
        <end position="632"/>
    </location>
</feature>
<feature type="compositionally biased region" description="Low complexity" evidence="6">
    <location>
        <begin position="44"/>
        <end position="55"/>
    </location>
</feature>
<feature type="compositionally biased region" description="Pro residues" evidence="6">
    <location>
        <begin position="58"/>
        <end position="73"/>
    </location>
</feature>
<feature type="active site" description="Charge relay system" evidence="1">
    <location>
        <position position="678"/>
    </location>
</feature>
<feature type="active site" description="Charge relay system" evidence="1">
    <location>
        <position position="728"/>
    </location>
</feature>
<feature type="active site" description="Charge relay system" evidence="1">
    <location>
        <position position="827"/>
    </location>
</feature>
<feature type="site" description="Reactive bond homolog" evidence="2">
    <location>
        <begin position="632"/>
        <end position="633"/>
    </location>
</feature>
<feature type="glycosylation site" description="N-linked (GlcNAc...) asparagine" evidence="2">
    <location>
        <position position="26"/>
    </location>
</feature>
<feature type="glycosylation site" description="N-linked (GlcNAc...) asparagine" evidence="2">
    <location>
        <position position="685"/>
    </location>
</feature>
<feature type="disulfide bond" evidence="1">
    <location>
        <begin position="95"/>
        <end position="167"/>
    </location>
</feature>
<feature type="disulfide bond" evidence="1">
    <location>
        <begin position="111"/>
        <end position="151"/>
    </location>
</feature>
<feature type="disulfide bond" evidence="1">
    <location>
        <begin position="140"/>
        <end position="165"/>
    </location>
</feature>
<feature type="disulfide bond" evidence="1">
    <location>
        <begin position="197"/>
        <end position="261"/>
    </location>
</feature>
<feature type="disulfide bond" evidence="1">
    <location>
        <begin position="210"/>
        <end position="271"/>
    </location>
</feature>
<feature type="disulfide bond" evidence="1">
    <location>
        <begin position="241"/>
        <end position="251"/>
    </location>
</feature>
<feature type="disulfide bond" evidence="1">
    <location>
        <begin position="307"/>
        <end position="371"/>
    </location>
</feature>
<feature type="disulfide bond" evidence="1">
    <location>
        <begin position="320"/>
        <end position="381"/>
    </location>
</feature>
<feature type="disulfide bond" evidence="1">
    <location>
        <begin position="351"/>
        <end position="361"/>
    </location>
</feature>
<feature type="disulfide bond" evidence="1">
    <location>
        <begin position="414"/>
        <end position="477"/>
    </location>
</feature>
<feature type="disulfide bond" evidence="1">
    <location>
        <begin position="427"/>
        <end position="487"/>
    </location>
</feature>
<feature type="disulfide bond" evidence="1">
    <location>
        <begin position="457"/>
        <end position="467"/>
    </location>
</feature>
<feature type="disulfide bond" evidence="1">
    <location>
        <begin position="527"/>
        <end position="591"/>
    </location>
</feature>
<feature type="disulfide bond" evidence="1">
    <location>
        <begin position="540"/>
        <end position="601"/>
    </location>
</feature>
<feature type="disulfide bond" evidence="1">
    <location>
        <begin position="571"/>
        <end position="581"/>
    </location>
</feature>
<feature type="disulfide bond" evidence="2">
    <location>
        <begin position="621"/>
        <end position="752"/>
    </location>
</feature>
<feature type="disulfide bond" evidence="1">
    <location>
        <begin position="663"/>
        <end position="679"/>
    </location>
</feature>
<feature type="disulfide bond" evidence="1">
    <location>
        <begin position="767"/>
        <end position="833"/>
    </location>
</feature>
<feature type="disulfide bond" evidence="1">
    <location>
        <begin position="796"/>
        <end position="810"/>
    </location>
</feature>
<feature type="disulfide bond" evidence="1">
    <location>
        <begin position="823"/>
        <end position="852"/>
    </location>
</feature>
<accession>Q5G269</accession>
<keyword id="KW-1015">Disulfide bond</keyword>
<keyword id="KW-0325">Glycoprotein</keyword>
<keyword id="KW-0378">Hydrolase</keyword>
<keyword id="KW-0420">Kringle</keyword>
<keyword id="KW-0645">Protease</keyword>
<keyword id="KW-0677">Repeat</keyword>
<keyword id="KW-0964">Secreted</keyword>
<keyword id="KW-0720">Serine protease</keyword>
<keyword id="KW-0732">Signal</keyword>
<proteinExistence type="inferred from homology"/>
<comment type="function">
    <text evidence="1">Plays a role in neuronal plasticity and the proteolytic action may subserve structural reorganizations associated with learning and memory operations.</text>
</comment>
<comment type="subcellular location">
    <subcellularLocation>
        <location>Secreted</location>
    </subcellularLocation>
</comment>
<comment type="similarity">
    <text evidence="5">Belongs to the peptidase S1 family.</text>
</comment>
<gene>
    <name type="primary">PRSS12</name>
</gene>
<name>NETR_PONPY</name>